<reference key="1">
    <citation type="journal article" date="2005" name="Nucleic Acids Res.">
        <title>Genome dynamics and diversity of Shigella species, the etiologic agents of bacillary dysentery.</title>
        <authorList>
            <person name="Yang F."/>
            <person name="Yang J."/>
            <person name="Zhang X."/>
            <person name="Chen L."/>
            <person name="Jiang Y."/>
            <person name="Yan Y."/>
            <person name="Tang X."/>
            <person name="Wang J."/>
            <person name="Xiong Z."/>
            <person name="Dong J."/>
            <person name="Xue Y."/>
            <person name="Zhu Y."/>
            <person name="Xu X."/>
            <person name="Sun L."/>
            <person name="Chen S."/>
            <person name="Nie H."/>
            <person name="Peng J."/>
            <person name="Xu J."/>
            <person name="Wang Y."/>
            <person name="Yuan Z."/>
            <person name="Wen Y."/>
            <person name="Yao Z."/>
            <person name="Shen Y."/>
            <person name="Qiang B."/>
            <person name="Hou Y."/>
            <person name="Yu J."/>
            <person name="Jin Q."/>
        </authorList>
    </citation>
    <scope>NUCLEOTIDE SEQUENCE [LARGE SCALE GENOMIC DNA]</scope>
    <source>
        <strain>Sd197</strain>
    </source>
</reference>
<dbReference type="EC" id="1.1.5.4" evidence="1"/>
<dbReference type="EMBL" id="CP000034">
    <property type="protein sequence ID" value="ABB61044.1"/>
    <property type="molecule type" value="Genomic_DNA"/>
</dbReference>
<dbReference type="RefSeq" id="WP_000758085.1">
    <property type="nucleotide sequence ID" value="NC_007606.1"/>
</dbReference>
<dbReference type="RefSeq" id="YP_402535.1">
    <property type="nucleotide sequence ID" value="NC_007606.1"/>
</dbReference>
<dbReference type="SMR" id="Q32I11"/>
<dbReference type="STRING" id="300267.SDY_0866"/>
<dbReference type="EnsemblBacteria" id="ABB61044">
    <property type="protein sequence ID" value="ABB61044"/>
    <property type="gene ID" value="SDY_0866"/>
</dbReference>
<dbReference type="KEGG" id="sdy:SDY_0866"/>
<dbReference type="PATRIC" id="fig|300267.13.peg.1000"/>
<dbReference type="HOGENOM" id="CLU_028151_0_0_6"/>
<dbReference type="UniPathway" id="UPA00223">
    <property type="reaction ID" value="UER01008"/>
</dbReference>
<dbReference type="Proteomes" id="UP000002716">
    <property type="component" value="Chromosome"/>
</dbReference>
<dbReference type="GO" id="GO:0047545">
    <property type="term" value="F:2-hydroxyglutarate dehydrogenase activity"/>
    <property type="evidence" value="ECO:0007669"/>
    <property type="project" value="TreeGrafter"/>
</dbReference>
<dbReference type="GO" id="GO:0008924">
    <property type="term" value="F:L-malate dehydrogenase (quinone) activity"/>
    <property type="evidence" value="ECO:0007669"/>
    <property type="project" value="UniProtKB-UniRule"/>
</dbReference>
<dbReference type="GO" id="GO:0006099">
    <property type="term" value="P:tricarboxylic acid cycle"/>
    <property type="evidence" value="ECO:0007669"/>
    <property type="project" value="UniProtKB-UniRule"/>
</dbReference>
<dbReference type="Gene3D" id="3.50.50.60">
    <property type="entry name" value="FAD/NAD(P)-binding domain"/>
    <property type="match status" value="1"/>
</dbReference>
<dbReference type="HAMAP" id="MF_00212">
    <property type="entry name" value="MQO"/>
    <property type="match status" value="1"/>
</dbReference>
<dbReference type="InterPro" id="IPR036188">
    <property type="entry name" value="FAD/NAD-bd_sf"/>
</dbReference>
<dbReference type="InterPro" id="IPR006231">
    <property type="entry name" value="MQO"/>
</dbReference>
<dbReference type="NCBIfam" id="TIGR01320">
    <property type="entry name" value="mal_quin_oxido"/>
    <property type="match status" value="1"/>
</dbReference>
<dbReference type="NCBIfam" id="NF003603">
    <property type="entry name" value="PRK05257.1-1"/>
    <property type="match status" value="1"/>
</dbReference>
<dbReference type="NCBIfam" id="NF003605">
    <property type="entry name" value="PRK05257.1-4"/>
    <property type="match status" value="1"/>
</dbReference>
<dbReference type="NCBIfam" id="NF003606">
    <property type="entry name" value="PRK05257.2-1"/>
    <property type="match status" value="1"/>
</dbReference>
<dbReference type="NCBIfam" id="NF003608">
    <property type="entry name" value="PRK05257.2-4"/>
    <property type="match status" value="1"/>
</dbReference>
<dbReference type="NCBIfam" id="NF003611">
    <property type="entry name" value="PRK05257.3-2"/>
    <property type="match status" value="1"/>
</dbReference>
<dbReference type="NCBIfam" id="NF009875">
    <property type="entry name" value="PRK13339.1"/>
    <property type="match status" value="1"/>
</dbReference>
<dbReference type="PANTHER" id="PTHR43104">
    <property type="entry name" value="L-2-HYDROXYGLUTARATE DEHYDROGENASE, MITOCHONDRIAL"/>
    <property type="match status" value="1"/>
</dbReference>
<dbReference type="PANTHER" id="PTHR43104:SF2">
    <property type="entry name" value="L-2-HYDROXYGLUTARATE DEHYDROGENASE, MITOCHONDRIAL"/>
    <property type="match status" value="1"/>
</dbReference>
<dbReference type="Pfam" id="PF06039">
    <property type="entry name" value="Mqo"/>
    <property type="match status" value="1"/>
</dbReference>
<dbReference type="SUPFAM" id="SSF51905">
    <property type="entry name" value="FAD/NAD(P)-binding domain"/>
    <property type="match status" value="1"/>
</dbReference>
<feature type="chain" id="PRO_1000023815" description="Probable malate:quinone oxidoreductase">
    <location>
        <begin position="1"/>
        <end position="548"/>
    </location>
</feature>
<feature type="region of interest" description="Disordered" evidence="2">
    <location>
        <begin position="520"/>
        <end position="548"/>
    </location>
</feature>
<feature type="compositionally biased region" description="Low complexity" evidence="2">
    <location>
        <begin position="530"/>
        <end position="541"/>
    </location>
</feature>
<gene>
    <name evidence="1" type="primary">mqo</name>
    <name type="ordered locus">SDY_0866</name>
</gene>
<evidence type="ECO:0000255" key="1">
    <source>
        <dbReference type="HAMAP-Rule" id="MF_00212"/>
    </source>
</evidence>
<evidence type="ECO:0000256" key="2">
    <source>
        <dbReference type="SAM" id="MobiDB-lite"/>
    </source>
</evidence>
<name>MQO_SHIDS</name>
<comment type="catalytic activity">
    <reaction evidence="1">
        <text>(S)-malate + a quinone = a quinol + oxaloacetate</text>
        <dbReference type="Rhea" id="RHEA:46012"/>
        <dbReference type="ChEBI" id="CHEBI:15589"/>
        <dbReference type="ChEBI" id="CHEBI:16452"/>
        <dbReference type="ChEBI" id="CHEBI:24646"/>
        <dbReference type="ChEBI" id="CHEBI:132124"/>
        <dbReference type="EC" id="1.1.5.4"/>
    </reaction>
</comment>
<comment type="cofactor">
    <cofactor evidence="1">
        <name>FAD</name>
        <dbReference type="ChEBI" id="CHEBI:57692"/>
    </cofactor>
</comment>
<comment type="pathway">
    <text evidence="1">Carbohydrate metabolism; tricarboxylic acid cycle; oxaloacetate from (S)-malate (quinone route): step 1/1.</text>
</comment>
<comment type="similarity">
    <text evidence="1">Belongs to the MQO family.</text>
</comment>
<keyword id="KW-0274">FAD</keyword>
<keyword id="KW-0285">Flavoprotein</keyword>
<keyword id="KW-0560">Oxidoreductase</keyword>
<keyword id="KW-1185">Reference proteome</keyword>
<keyword id="KW-0816">Tricarboxylic acid cycle</keyword>
<proteinExistence type="inferred from homology"/>
<accession>Q32I11</accession>
<organism>
    <name type="scientific">Shigella dysenteriae serotype 1 (strain Sd197)</name>
    <dbReference type="NCBI Taxonomy" id="300267"/>
    <lineage>
        <taxon>Bacteria</taxon>
        <taxon>Pseudomonadati</taxon>
        <taxon>Pseudomonadota</taxon>
        <taxon>Gammaproteobacteria</taxon>
        <taxon>Enterobacterales</taxon>
        <taxon>Enterobacteriaceae</taxon>
        <taxon>Shigella</taxon>
    </lineage>
</organism>
<sequence>MKKVTAMLFSMAVGLNAVSMAAKAKASEEQETDVLLIGGGIMSATLGTYLRELEPEWSMTMVERLEGVAQESSNGWNNAGTGHSALMELNYTPQNADGSISIEKAVAINEAFQISRQFWAHQVERGVLRTPRSFINTVPHMSFVWGEDNVNFLRARYAALQQSSLFRGMRYSEDHAQIKEWAPLVMEGRDPQQKVAATRTEIGTDVNYGEITRQLISSLQKKSNFSLQLSSEVRALKRNDDNTWTVTVADLKNGTAQNIRAKFVFIGAGGAALKLLQESGIPEAKDYAGFPVGGQFLVSENPDVVNHHLAKVYGKASVGAPPMSVPHIDTRVLDGKRVVLFGPFATFSTKFLKNGSLWDLMSSTTTSNVMPMMHVGLDNFDLVKYLVSQVMLSEEDRFEALKEYYPQAKKEDWRLWQAGQRVQIIKRDADKGGVLRLGTEVVSDQQGTIAALLGASPGASTAAPIMLNLLEKVFGDRVSSPQWQATLKAIVPSYGRKLNGDVAATERELQYTSEVLGLKYDRPQAADSTPKPQLKPQPVQKEVADIAL</sequence>
<protein>
    <recommendedName>
        <fullName evidence="1">Probable malate:quinone oxidoreductase</fullName>
        <ecNumber evidence="1">1.1.5.4</ecNumber>
    </recommendedName>
    <alternativeName>
        <fullName evidence="1">MQO</fullName>
    </alternativeName>
    <alternativeName>
        <fullName evidence="1">Malate dehydrogenase [quinone]</fullName>
    </alternativeName>
</protein>